<reference key="1">
    <citation type="submission" date="2008-05" db="EMBL/GenBank/DDBJ databases">
        <title>Complete sequence of Shigella boydii serotype 18 strain BS512.</title>
        <authorList>
            <person name="Rasko D.A."/>
            <person name="Rosovitz M."/>
            <person name="Maurelli A.T."/>
            <person name="Myers G."/>
            <person name="Seshadri R."/>
            <person name="Cer R."/>
            <person name="Jiang L."/>
            <person name="Ravel J."/>
            <person name="Sebastian Y."/>
        </authorList>
    </citation>
    <scope>NUCLEOTIDE SEQUENCE [LARGE SCALE GENOMIC DNA]</scope>
    <source>
        <strain>CDC 3083-94 / BS512</strain>
    </source>
</reference>
<feature type="chain" id="PRO_1000138063" description="N-succinylglutamate 5-semialdehyde dehydrogenase">
    <location>
        <begin position="1"/>
        <end position="492"/>
    </location>
</feature>
<feature type="active site" evidence="1">
    <location>
        <position position="243"/>
    </location>
</feature>
<feature type="active site" evidence="1">
    <location>
        <position position="277"/>
    </location>
</feature>
<feature type="binding site" evidence="1">
    <location>
        <begin position="220"/>
        <end position="225"/>
    </location>
    <ligand>
        <name>NAD(+)</name>
        <dbReference type="ChEBI" id="CHEBI:57540"/>
    </ligand>
</feature>
<organism>
    <name type="scientific">Shigella boydii serotype 18 (strain CDC 3083-94 / BS512)</name>
    <dbReference type="NCBI Taxonomy" id="344609"/>
    <lineage>
        <taxon>Bacteria</taxon>
        <taxon>Pseudomonadati</taxon>
        <taxon>Pseudomonadota</taxon>
        <taxon>Gammaproteobacteria</taxon>
        <taxon>Enterobacterales</taxon>
        <taxon>Enterobacteriaceae</taxon>
        <taxon>Shigella</taxon>
    </lineage>
</organism>
<gene>
    <name evidence="1" type="primary">astD</name>
    <name type="ordered locus">SbBS512_E1993</name>
</gene>
<dbReference type="EC" id="1.2.1.71" evidence="1"/>
<dbReference type="EMBL" id="CP001063">
    <property type="protein sequence ID" value="ACD09547.1"/>
    <property type="molecule type" value="Genomic_DNA"/>
</dbReference>
<dbReference type="RefSeq" id="WP_000177217.1">
    <property type="nucleotide sequence ID" value="NC_010658.1"/>
</dbReference>
<dbReference type="SMR" id="B2U3C8"/>
<dbReference type="STRING" id="344609.SbBS512_E1993"/>
<dbReference type="KEGG" id="sbc:SbBS512_E1993"/>
<dbReference type="HOGENOM" id="CLU_005391_1_0_6"/>
<dbReference type="UniPathway" id="UPA00185">
    <property type="reaction ID" value="UER00282"/>
</dbReference>
<dbReference type="Proteomes" id="UP000001030">
    <property type="component" value="Chromosome"/>
</dbReference>
<dbReference type="GO" id="GO:0043824">
    <property type="term" value="F:succinylglutamate-semialdehyde dehydrogenase activity"/>
    <property type="evidence" value="ECO:0007669"/>
    <property type="project" value="UniProtKB-EC"/>
</dbReference>
<dbReference type="GO" id="GO:0019544">
    <property type="term" value="P:arginine catabolic process to glutamate"/>
    <property type="evidence" value="ECO:0007669"/>
    <property type="project" value="UniProtKB-UniRule"/>
</dbReference>
<dbReference type="GO" id="GO:0019545">
    <property type="term" value="P:arginine catabolic process to succinate"/>
    <property type="evidence" value="ECO:0007669"/>
    <property type="project" value="UniProtKB-UniRule"/>
</dbReference>
<dbReference type="CDD" id="cd07095">
    <property type="entry name" value="ALDH_SGSD_AstD"/>
    <property type="match status" value="1"/>
</dbReference>
<dbReference type="FunFam" id="3.40.309.10:FF:000013">
    <property type="entry name" value="N-succinylglutamate 5-semialdehyde dehydrogenase"/>
    <property type="match status" value="1"/>
</dbReference>
<dbReference type="FunFam" id="3.40.605.10:FF:000010">
    <property type="entry name" value="N-succinylglutamate 5-semialdehyde dehydrogenase"/>
    <property type="match status" value="1"/>
</dbReference>
<dbReference type="Gene3D" id="3.40.605.10">
    <property type="entry name" value="Aldehyde Dehydrogenase, Chain A, domain 1"/>
    <property type="match status" value="1"/>
</dbReference>
<dbReference type="Gene3D" id="3.40.309.10">
    <property type="entry name" value="Aldehyde Dehydrogenase, Chain A, domain 2"/>
    <property type="match status" value="1"/>
</dbReference>
<dbReference type="HAMAP" id="MF_01174">
    <property type="entry name" value="Aldedh_AstD"/>
    <property type="match status" value="1"/>
</dbReference>
<dbReference type="InterPro" id="IPR016161">
    <property type="entry name" value="Ald_DH/histidinol_DH"/>
</dbReference>
<dbReference type="InterPro" id="IPR016163">
    <property type="entry name" value="Ald_DH_C"/>
</dbReference>
<dbReference type="InterPro" id="IPR016160">
    <property type="entry name" value="Ald_DH_CS_CYS"/>
</dbReference>
<dbReference type="InterPro" id="IPR029510">
    <property type="entry name" value="Ald_DH_CS_GLU"/>
</dbReference>
<dbReference type="InterPro" id="IPR016162">
    <property type="entry name" value="Ald_DH_N"/>
</dbReference>
<dbReference type="InterPro" id="IPR015590">
    <property type="entry name" value="Aldehyde_DH_dom"/>
</dbReference>
<dbReference type="InterPro" id="IPR017649">
    <property type="entry name" value="SuccinylGlu_semiald_DH_AstD"/>
</dbReference>
<dbReference type="NCBIfam" id="TIGR03240">
    <property type="entry name" value="arg_catab_astD"/>
    <property type="match status" value="1"/>
</dbReference>
<dbReference type="NCBIfam" id="NF006992">
    <property type="entry name" value="PRK09457.1"/>
    <property type="match status" value="1"/>
</dbReference>
<dbReference type="PANTHER" id="PTHR11699">
    <property type="entry name" value="ALDEHYDE DEHYDROGENASE-RELATED"/>
    <property type="match status" value="1"/>
</dbReference>
<dbReference type="Pfam" id="PF00171">
    <property type="entry name" value="Aldedh"/>
    <property type="match status" value="1"/>
</dbReference>
<dbReference type="SUPFAM" id="SSF53720">
    <property type="entry name" value="ALDH-like"/>
    <property type="match status" value="1"/>
</dbReference>
<dbReference type="PROSITE" id="PS00070">
    <property type="entry name" value="ALDEHYDE_DEHYDR_CYS"/>
    <property type="match status" value="1"/>
</dbReference>
<dbReference type="PROSITE" id="PS00687">
    <property type="entry name" value="ALDEHYDE_DEHYDR_GLU"/>
    <property type="match status" value="1"/>
</dbReference>
<keyword id="KW-0056">Arginine metabolism</keyword>
<keyword id="KW-0520">NAD</keyword>
<keyword id="KW-0560">Oxidoreductase</keyword>
<keyword id="KW-1185">Reference proteome</keyword>
<comment type="function">
    <text evidence="1">Catalyzes the NAD-dependent reduction of succinylglutamate semialdehyde into succinylglutamate.</text>
</comment>
<comment type="catalytic activity">
    <reaction evidence="1">
        <text>N-succinyl-L-glutamate 5-semialdehyde + NAD(+) + H2O = N-succinyl-L-glutamate + NADH + 2 H(+)</text>
        <dbReference type="Rhea" id="RHEA:10812"/>
        <dbReference type="ChEBI" id="CHEBI:15377"/>
        <dbReference type="ChEBI" id="CHEBI:15378"/>
        <dbReference type="ChEBI" id="CHEBI:57540"/>
        <dbReference type="ChEBI" id="CHEBI:57945"/>
        <dbReference type="ChEBI" id="CHEBI:58520"/>
        <dbReference type="ChEBI" id="CHEBI:58763"/>
        <dbReference type="EC" id="1.2.1.71"/>
    </reaction>
</comment>
<comment type="pathway">
    <text evidence="1">Amino-acid degradation; L-arginine degradation via AST pathway; L-glutamate and succinate from L-arginine: step 4/5.</text>
</comment>
<comment type="similarity">
    <text evidence="1">Belongs to the aldehyde dehydrogenase family. AstD subfamily.</text>
</comment>
<sequence>MTLWINGDWITGQGASRVKRNPVSGEVLWQGNDADAAQVEQACRAARAAFPRWARLSLAERQVVVERFAGLLESNKAELTAIIARETGKPRWEAATEVTAMINKIAISIKAYHVRTGEQRSEMPDGAASLRHRPHGVLAVFGPYNFPGHLPNGHIVPALLAGNTIIFKPSELTPWSGEAVMRLWQQAGLPPGVLNLVQGGRETGQALSALEDLDGLLFTGRANTGYQLHRQLSGQPEKILALEMGGNNPLIIDEVADIDAAVHLTIQSAFVTAGQRCTCARRLLLKSGAQGDAFLARLVAVSQRLTPGNWDDEPQPFIGGLISEQAAQQVVTAWQQLEAMGGRTLLAPRLLQSETSLLTPGIIEMTGVAGVPDEEVFGPLLRVWRYDSFEEAILMANNTRFGLSCGLVSPEREKFDQLLLEARAGIVNWNKPLTGAASTAPFGGIGASGNHRPSAWYAADYCAWPMASLESDSLTLPATLNPGLDFSDEVVR</sequence>
<evidence type="ECO:0000255" key="1">
    <source>
        <dbReference type="HAMAP-Rule" id="MF_01174"/>
    </source>
</evidence>
<name>ASTD_SHIB3</name>
<proteinExistence type="inferred from homology"/>
<protein>
    <recommendedName>
        <fullName evidence="1">N-succinylglutamate 5-semialdehyde dehydrogenase</fullName>
        <ecNumber evidence="1">1.2.1.71</ecNumber>
    </recommendedName>
    <alternativeName>
        <fullName evidence="1">Succinylglutamic semialdehyde dehydrogenase</fullName>
        <shortName evidence="1">SGSD</shortName>
    </alternativeName>
</protein>
<accession>B2U3C8</accession>